<feature type="chain" id="PRO_1000083693" description="UPF0340 protein SGO_0411">
    <location>
        <begin position="1"/>
        <end position="187"/>
    </location>
</feature>
<evidence type="ECO:0000255" key="1">
    <source>
        <dbReference type="HAMAP-Rule" id="MF_00800"/>
    </source>
</evidence>
<accession>A8AVB7</accession>
<gene>
    <name type="ordered locus">SGO_0411</name>
</gene>
<keyword id="KW-1185">Reference proteome</keyword>
<proteinExistence type="inferred from homology"/>
<dbReference type="EMBL" id="CP000725">
    <property type="protein sequence ID" value="ABV10451.1"/>
    <property type="molecule type" value="Genomic_DNA"/>
</dbReference>
<dbReference type="RefSeq" id="WP_011999923.1">
    <property type="nucleotide sequence ID" value="NC_009785.1"/>
</dbReference>
<dbReference type="SMR" id="A8AVB7"/>
<dbReference type="STRING" id="467705.SGO_0411"/>
<dbReference type="KEGG" id="sgo:SGO_0411"/>
<dbReference type="eggNOG" id="COG4475">
    <property type="taxonomic scope" value="Bacteria"/>
</dbReference>
<dbReference type="HOGENOM" id="CLU_106658_0_0_9"/>
<dbReference type="Proteomes" id="UP000001131">
    <property type="component" value="Chromosome"/>
</dbReference>
<dbReference type="Gene3D" id="3.40.50.10360">
    <property type="entry name" value="Hypothetical protein TT1679"/>
    <property type="match status" value="1"/>
</dbReference>
<dbReference type="HAMAP" id="MF_00800">
    <property type="entry name" value="UPF0340"/>
    <property type="match status" value="1"/>
</dbReference>
<dbReference type="InterPro" id="IPR028345">
    <property type="entry name" value="Antibiotic_NAT-like"/>
</dbReference>
<dbReference type="InterPro" id="IPR006340">
    <property type="entry name" value="DUF436"/>
</dbReference>
<dbReference type="NCBIfam" id="TIGR01440">
    <property type="entry name" value="TIGR01440 family protein"/>
    <property type="match status" value="1"/>
</dbReference>
<dbReference type="Pfam" id="PF04260">
    <property type="entry name" value="DUF436"/>
    <property type="match status" value="1"/>
</dbReference>
<dbReference type="PIRSF" id="PIRSF007510">
    <property type="entry name" value="UCP007510"/>
    <property type="match status" value="1"/>
</dbReference>
<dbReference type="SUPFAM" id="SSF110710">
    <property type="entry name" value="TTHA0583/YokD-like"/>
    <property type="match status" value="1"/>
</dbReference>
<organism>
    <name type="scientific">Streptococcus gordonii (strain Challis / ATCC 35105 / BCRC 15272 / CH1 / DL1 / V288)</name>
    <dbReference type="NCBI Taxonomy" id="467705"/>
    <lineage>
        <taxon>Bacteria</taxon>
        <taxon>Bacillati</taxon>
        <taxon>Bacillota</taxon>
        <taxon>Bacilli</taxon>
        <taxon>Lactobacillales</taxon>
        <taxon>Streptococcaceae</taxon>
        <taxon>Streptococcus</taxon>
    </lineage>
</organism>
<reference key="1">
    <citation type="journal article" date="2007" name="J. Bacteriol.">
        <title>Genome-wide transcriptional changes in Streptococcus gordonii in response to competence signaling peptide.</title>
        <authorList>
            <person name="Vickerman M.M."/>
            <person name="Iobst S."/>
            <person name="Jesionowski A.M."/>
            <person name="Gill S.R."/>
        </authorList>
    </citation>
    <scope>NUCLEOTIDE SEQUENCE [LARGE SCALE GENOMIC DNA]</scope>
    <source>
        <strain>Challis / ATCC 35105 / BCRC 15272 / CH1 / DL1 / V288</strain>
    </source>
</reference>
<protein>
    <recommendedName>
        <fullName evidence="1">UPF0340 protein SGO_0411</fullName>
    </recommendedName>
</protein>
<comment type="similarity">
    <text evidence="1">Belongs to the UPF0340 family.</text>
</comment>
<name>Y411_STRGC</name>
<sequence>MDLDKIGAETRQILQDVLDKASLDEGDVFVLGLSSSEVMGGHIGRNSSLEVGQVIVKTVLDILEEKGIFLAVQGCEHLNRALVVERSLAKKKDLEIVNVLPTLHAGGSGQLAAFQYMKDPVEVEFIVAQAGLDIGDTAIGMHVKHVQIPIRPKLKSVGAAHVTALASRPKLIGGSRAAYREDKIRKD</sequence>